<evidence type="ECO:0000255" key="1">
    <source>
        <dbReference type="HAMAP-Rule" id="MF_00148"/>
    </source>
</evidence>
<name>UNG_STAEQ</name>
<keyword id="KW-0963">Cytoplasm</keyword>
<keyword id="KW-0227">DNA damage</keyword>
<keyword id="KW-0234">DNA repair</keyword>
<keyword id="KW-0378">Hydrolase</keyword>
<keyword id="KW-1185">Reference proteome</keyword>
<protein>
    <recommendedName>
        <fullName evidence="1">Uracil-DNA glycosylase</fullName>
        <shortName evidence="1">UDG</shortName>
        <ecNumber evidence="1">3.2.2.27</ecNumber>
    </recommendedName>
</protein>
<comment type="function">
    <text evidence="1">Excises uracil residues from the DNA which can arise as a result of misincorporation of dUMP residues by DNA polymerase or due to deamination of cytosine.</text>
</comment>
<comment type="catalytic activity">
    <reaction evidence="1">
        <text>Hydrolyzes single-stranded DNA or mismatched double-stranded DNA and polynucleotides, releasing free uracil.</text>
        <dbReference type="EC" id="3.2.2.27"/>
    </reaction>
</comment>
<comment type="subcellular location">
    <subcellularLocation>
        <location evidence="1">Cytoplasm</location>
    </subcellularLocation>
</comment>
<comment type="similarity">
    <text evidence="1">Belongs to the uracil-DNA glycosylase (UDG) superfamily. UNG family.</text>
</comment>
<sequence length="216" mass="25106">MKWSEVFHDITTRHDFQAMHDFLEKEYTTQIVYPDKKNIYQAFDLTPFEDIKVVILGQDPYHGPNQAHGLAFSVQPHAKFPPSLRNMYQELENDIGCHRTSPHLQDWAREGVLLLNTVLTVRQGEAHSHRNIGWETFTDEIIQAVSNYREHVVFILWGRPAQQKERFIDTSKHLIIKSPHPSPLSAFRGFFGSKPYSTTNNYLKSKGKTPVQWCES</sequence>
<reference key="1">
    <citation type="journal article" date="2005" name="J. Bacteriol.">
        <title>Insights on evolution of virulence and resistance from the complete genome analysis of an early methicillin-resistant Staphylococcus aureus strain and a biofilm-producing methicillin-resistant Staphylococcus epidermidis strain.</title>
        <authorList>
            <person name="Gill S.R."/>
            <person name="Fouts D.E."/>
            <person name="Archer G.L."/>
            <person name="Mongodin E.F."/>
            <person name="DeBoy R.T."/>
            <person name="Ravel J."/>
            <person name="Paulsen I.T."/>
            <person name="Kolonay J.F."/>
            <person name="Brinkac L.M."/>
            <person name="Beanan M.J."/>
            <person name="Dodson R.J."/>
            <person name="Daugherty S.C."/>
            <person name="Madupu R."/>
            <person name="Angiuoli S.V."/>
            <person name="Durkin A.S."/>
            <person name="Haft D.H."/>
            <person name="Vamathevan J.J."/>
            <person name="Khouri H."/>
            <person name="Utterback T.R."/>
            <person name="Lee C."/>
            <person name="Dimitrov G."/>
            <person name="Jiang L."/>
            <person name="Qin H."/>
            <person name="Weidman J."/>
            <person name="Tran K."/>
            <person name="Kang K.H."/>
            <person name="Hance I.R."/>
            <person name="Nelson K.E."/>
            <person name="Fraser C.M."/>
        </authorList>
    </citation>
    <scope>NUCLEOTIDE SEQUENCE [LARGE SCALE GENOMIC DNA]</scope>
    <source>
        <strain>ATCC 35984 / DSM 28319 / BCRC 17069 / CCUG 31568 / BM 3577 / RP62A</strain>
    </source>
</reference>
<dbReference type="EC" id="3.2.2.27" evidence="1"/>
<dbReference type="EMBL" id="CP000029">
    <property type="protein sequence ID" value="AAW53615.1"/>
    <property type="molecule type" value="Genomic_DNA"/>
</dbReference>
<dbReference type="RefSeq" id="WP_002445765.1">
    <property type="nucleotide sequence ID" value="NC_002976.3"/>
</dbReference>
<dbReference type="SMR" id="Q5HRG5"/>
<dbReference type="STRING" id="176279.SERP0228"/>
<dbReference type="KEGG" id="ser:SERP0228"/>
<dbReference type="eggNOG" id="COG0692">
    <property type="taxonomic scope" value="Bacteria"/>
</dbReference>
<dbReference type="HOGENOM" id="CLU_032162_3_1_9"/>
<dbReference type="Proteomes" id="UP000000531">
    <property type="component" value="Chromosome"/>
</dbReference>
<dbReference type="GO" id="GO:0005737">
    <property type="term" value="C:cytoplasm"/>
    <property type="evidence" value="ECO:0007669"/>
    <property type="project" value="UniProtKB-SubCell"/>
</dbReference>
<dbReference type="GO" id="GO:0004844">
    <property type="term" value="F:uracil DNA N-glycosylase activity"/>
    <property type="evidence" value="ECO:0007669"/>
    <property type="project" value="UniProtKB-UniRule"/>
</dbReference>
<dbReference type="GO" id="GO:0097510">
    <property type="term" value="P:base-excision repair, AP site formation via deaminated base removal"/>
    <property type="evidence" value="ECO:0007669"/>
    <property type="project" value="TreeGrafter"/>
</dbReference>
<dbReference type="CDD" id="cd10027">
    <property type="entry name" value="UDG-F1-like"/>
    <property type="match status" value="1"/>
</dbReference>
<dbReference type="FunFam" id="3.40.470.10:FF:000001">
    <property type="entry name" value="Uracil-DNA glycosylase"/>
    <property type="match status" value="1"/>
</dbReference>
<dbReference type="Gene3D" id="3.40.470.10">
    <property type="entry name" value="Uracil-DNA glycosylase-like domain"/>
    <property type="match status" value="1"/>
</dbReference>
<dbReference type="HAMAP" id="MF_00148">
    <property type="entry name" value="UDG"/>
    <property type="match status" value="1"/>
</dbReference>
<dbReference type="InterPro" id="IPR002043">
    <property type="entry name" value="UDG_fam1"/>
</dbReference>
<dbReference type="InterPro" id="IPR018085">
    <property type="entry name" value="Ura-DNA_Glyclase_AS"/>
</dbReference>
<dbReference type="InterPro" id="IPR005122">
    <property type="entry name" value="Uracil-DNA_glycosylase-like"/>
</dbReference>
<dbReference type="InterPro" id="IPR036895">
    <property type="entry name" value="Uracil-DNA_glycosylase-like_sf"/>
</dbReference>
<dbReference type="NCBIfam" id="NF003588">
    <property type="entry name" value="PRK05254.1-1"/>
    <property type="match status" value="1"/>
</dbReference>
<dbReference type="NCBIfam" id="NF003589">
    <property type="entry name" value="PRK05254.1-2"/>
    <property type="match status" value="1"/>
</dbReference>
<dbReference type="NCBIfam" id="NF003591">
    <property type="entry name" value="PRK05254.1-4"/>
    <property type="match status" value="1"/>
</dbReference>
<dbReference type="NCBIfam" id="NF003592">
    <property type="entry name" value="PRK05254.1-5"/>
    <property type="match status" value="1"/>
</dbReference>
<dbReference type="NCBIfam" id="TIGR00628">
    <property type="entry name" value="ung"/>
    <property type="match status" value="1"/>
</dbReference>
<dbReference type="PANTHER" id="PTHR11264">
    <property type="entry name" value="URACIL-DNA GLYCOSYLASE"/>
    <property type="match status" value="1"/>
</dbReference>
<dbReference type="PANTHER" id="PTHR11264:SF0">
    <property type="entry name" value="URACIL-DNA GLYCOSYLASE"/>
    <property type="match status" value="1"/>
</dbReference>
<dbReference type="Pfam" id="PF03167">
    <property type="entry name" value="UDG"/>
    <property type="match status" value="1"/>
</dbReference>
<dbReference type="SMART" id="SM00986">
    <property type="entry name" value="UDG"/>
    <property type="match status" value="1"/>
</dbReference>
<dbReference type="SMART" id="SM00987">
    <property type="entry name" value="UreE_C"/>
    <property type="match status" value="1"/>
</dbReference>
<dbReference type="SUPFAM" id="SSF52141">
    <property type="entry name" value="Uracil-DNA glycosylase-like"/>
    <property type="match status" value="1"/>
</dbReference>
<dbReference type="PROSITE" id="PS00130">
    <property type="entry name" value="U_DNA_GLYCOSYLASE"/>
    <property type="match status" value="1"/>
</dbReference>
<accession>Q5HRG5</accession>
<organism>
    <name type="scientific">Staphylococcus epidermidis (strain ATCC 35984 / DSM 28319 / BCRC 17069 / CCUG 31568 / BM 3577 / RP62A)</name>
    <dbReference type="NCBI Taxonomy" id="176279"/>
    <lineage>
        <taxon>Bacteria</taxon>
        <taxon>Bacillati</taxon>
        <taxon>Bacillota</taxon>
        <taxon>Bacilli</taxon>
        <taxon>Bacillales</taxon>
        <taxon>Staphylococcaceae</taxon>
        <taxon>Staphylococcus</taxon>
    </lineage>
</organism>
<gene>
    <name evidence="1" type="primary">ung</name>
    <name type="ordered locus">SERP0228</name>
</gene>
<feature type="chain" id="PRO_0000176143" description="Uracil-DNA glycosylase">
    <location>
        <begin position="1"/>
        <end position="216"/>
    </location>
</feature>
<feature type="active site" description="Proton acceptor" evidence="1">
    <location>
        <position position="59"/>
    </location>
</feature>
<proteinExistence type="inferred from homology"/>